<reference key="1">
    <citation type="journal article" date="2003" name="Genome Res.">
        <title>Comparative genome analysis of Vibrio vulnificus, a marine pathogen.</title>
        <authorList>
            <person name="Chen C.-Y."/>
            <person name="Wu K.-M."/>
            <person name="Chang Y.-C."/>
            <person name="Chang C.-H."/>
            <person name="Tsai H.-C."/>
            <person name="Liao T.-L."/>
            <person name="Liu Y.-M."/>
            <person name="Chen H.-J."/>
            <person name="Shen A.B.-T."/>
            <person name="Li J.-C."/>
            <person name="Su T.-L."/>
            <person name="Shao C.-P."/>
            <person name="Lee C.-T."/>
            <person name="Hor L.-I."/>
            <person name="Tsai S.-F."/>
        </authorList>
    </citation>
    <scope>NUCLEOTIDE SEQUENCE [LARGE SCALE GENOMIC DNA]</scope>
    <source>
        <strain>YJ016</strain>
    </source>
</reference>
<dbReference type="EC" id="4.2.3.5" evidence="1"/>
<dbReference type="EMBL" id="BA000037">
    <property type="protein sequence ID" value="BAC95198.1"/>
    <property type="status" value="ALT_INIT"/>
    <property type="molecule type" value="Genomic_DNA"/>
</dbReference>
<dbReference type="RefSeq" id="WP_011150889.1">
    <property type="nucleotide sequence ID" value="NC_005139.1"/>
</dbReference>
<dbReference type="SMR" id="Q7MIT1"/>
<dbReference type="STRING" id="672.VV93_v1c21370"/>
<dbReference type="KEGG" id="vvy:VV2434"/>
<dbReference type="PATRIC" id="fig|196600.6.peg.2440"/>
<dbReference type="eggNOG" id="COG0082">
    <property type="taxonomic scope" value="Bacteria"/>
</dbReference>
<dbReference type="HOGENOM" id="CLU_034547_0_2_6"/>
<dbReference type="UniPathway" id="UPA00053">
    <property type="reaction ID" value="UER00090"/>
</dbReference>
<dbReference type="Proteomes" id="UP000002675">
    <property type="component" value="Chromosome I"/>
</dbReference>
<dbReference type="GO" id="GO:0005829">
    <property type="term" value="C:cytosol"/>
    <property type="evidence" value="ECO:0007669"/>
    <property type="project" value="TreeGrafter"/>
</dbReference>
<dbReference type="GO" id="GO:0004107">
    <property type="term" value="F:chorismate synthase activity"/>
    <property type="evidence" value="ECO:0007669"/>
    <property type="project" value="UniProtKB-UniRule"/>
</dbReference>
<dbReference type="GO" id="GO:0010181">
    <property type="term" value="F:FMN binding"/>
    <property type="evidence" value="ECO:0007669"/>
    <property type="project" value="TreeGrafter"/>
</dbReference>
<dbReference type="GO" id="GO:0008652">
    <property type="term" value="P:amino acid biosynthetic process"/>
    <property type="evidence" value="ECO:0007669"/>
    <property type="project" value="UniProtKB-KW"/>
</dbReference>
<dbReference type="GO" id="GO:0009073">
    <property type="term" value="P:aromatic amino acid family biosynthetic process"/>
    <property type="evidence" value="ECO:0007669"/>
    <property type="project" value="UniProtKB-KW"/>
</dbReference>
<dbReference type="GO" id="GO:0009423">
    <property type="term" value="P:chorismate biosynthetic process"/>
    <property type="evidence" value="ECO:0007669"/>
    <property type="project" value="UniProtKB-UniRule"/>
</dbReference>
<dbReference type="CDD" id="cd07304">
    <property type="entry name" value="Chorismate_synthase"/>
    <property type="match status" value="1"/>
</dbReference>
<dbReference type="FunFam" id="3.60.150.10:FF:000001">
    <property type="entry name" value="Chorismate synthase"/>
    <property type="match status" value="1"/>
</dbReference>
<dbReference type="Gene3D" id="3.60.150.10">
    <property type="entry name" value="Chorismate synthase AroC"/>
    <property type="match status" value="1"/>
</dbReference>
<dbReference type="HAMAP" id="MF_00300">
    <property type="entry name" value="Chorismate_synth"/>
    <property type="match status" value="1"/>
</dbReference>
<dbReference type="InterPro" id="IPR000453">
    <property type="entry name" value="Chorismate_synth"/>
</dbReference>
<dbReference type="InterPro" id="IPR035904">
    <property type="entry name" value="Chorismate_synth_AroC_sf"/>
</dbReference>
<dbReference type="InterPro" id="IPR020541">
    <property type="entry name" value="Chorismate_synthase_CS"/>
</dbReference>
<dbReference type="NCBIfam" id="TIGR00033">
    <property type="entry name" value="aroC"/>
    <property type="match status" value="1"/>
</dbReference>
<dbReference type="NCBIfam" id="NF003793">
    <property type="entry name" value="PRK05382.1"/>
    <property type="match status" value="1"/>
</dbReference>
<dbReference type="PANTHER" id="PTHR21085">
    <property type="entry name" value="CHORISMATE SYNTHASE"/>
    <property type="match status" value="1"/>
</dbReference>
<dbReference type="PANTHER" id="PTHR21085:SF0">
    <property type="entry name" value="CHORISMATE SYNTHASE"/>
    <property type="match status" value="1"/>
</dbReference>
<dbReference type="Pfam" id="PF01264">
    <property type="entry name" value="Chorismate_synt"/>
    <property type="match status" value="1"/>
</dbReference>
<dbReference type="PIRSF" id="PIRSF001456">
    <property type="entry name" value="Chorismate_synth"/>
    <property type="match status" value="1"/>
</dbReference>
<dbReference type="SUPFAM" id="SSF103263">
    <property type="entry name" value="Chorismate synthase, AroC"/>
    <property type="match status" value="1"/>
</dbReference>
<dbReference type="PROSITE" id="PS00787">
    <property type="entry name" value="CHORISMATE_SYNTHASE_1"/>
    <property type="match status" value="1"/>
</dbReference>
<dbReference type="PROSITE" id="PS00788">
    <property type="entry name" value="CHORISMATE_SYNTHASE_2"/>
    <property type="match status" value="1"/>
</dbReference>
<dbReference type="PROSITE" id="PS00789">
    <property type="entry name" value="CHORISMATE_SYNTHASE_3"/>
    <property type="match status" value="1"/>
</dbReference>
<evidence type="ECO:0000255" key="1">
    <source>
        <dbReference type="HAMAP-Rule" id="MF_00300"/>
    </source>
</evidence>
<evidence type="ECO:0000305" key="2"/>
<feature type="chain" id="PRO_0000140676" description="Chorismate synthase">
    <location>
        <begin position="1"/>
        <end position="361"/>
    </location>
</feature>
<feature type="binding site" evidence="1">
    <location>
        <position position="48"/>
    </location>
    <ligand>
        <name>NADP(+)</name>
        <dbReference type="ChEBI" id="CHEBI:58349"/>
    </ligand>
</feature>
<feature type="binding site" evidence="1">
    <location>
        <position position="54"/>
    </location>
    <ligand>
        <name>NADP(+)</name>
        <dbReference type="ChEBI" id="CHEBI:58349"/>
    </ligand>
</feature>
<feature type="binding site" evidence="1">
    <location>
        <begin position="125"/>
        <end position="127"/>
    </location>
    <ligand>
        <name>FMN</name>
        <dbReference type="ChEBI" id="CHEBI:58210"/>
    </ligand>
</feature>
<feature type="binding site" evidence="1">
    <location>
        <begin position="238"/>
        <end position="239"/>
    </location>
    <ligand>
        <name>FMN</name>
        <dbReference type="ChEBI" id="CHEBI:58210"/>
    </ligand>
</feature>
<feature type="binding site" evidence="1">
    <location>
        <position position="278"/>
    </location>
    <ligand>
        <name>FMN</name>
        <dbReference type="ChEBI" id="CHEBI:58210"/>
    </ligand>
</feature>
<feature type="binding site" evidence="1">
    <location>
        <begin position="293"/>
        <end position="297"/>
    </location>
    <ligand>
        <name>FMN</name>
        <dbReference type="ChEBI" id="CHEBI:58210"/>
    </ligand>
</feature>
<feature type="binding site" evidence="1">
    <location>
        <position position="319"/>
    </location>
    <ligand>
        <name>FMN</name>
        <dbReference type="ChEBI" id="CHEBI:58210"/>
    </ligand>
</feature>
<proteinExistence type="inferred from homology"/>
<sequence length="361" mass="39022">MAGNSIGQHFRVTTFGESHGIALGCIVDGCPPGLEISEADLQTDLDRRRPGTSRYTTQRREPDEVKILSGVFEGKTTGTSIGLLIENTDQRSKDYSDIKDKFRPGHADYTYHQKYGIRDYRGGGRSSARETAMRVAAGAIAKKYLKQEFGVEIRAYLSQMGDVAIDKVDWNEIENNPFFCPDVDKVEAFDQLIRDLKKEGDSIGAKIQVVATNVPVGLGEPVFDRLDADIAHALMSINAVKGVEIGDGFDVVSQKGSQHRDTLSPQGFGSNHAGGILGGISTGQDIVANIALKPTSSITVPGDTINVDGESTQLITKGRHDPCVGIRAVPIAEAMLAIVVMDHLLRHRGQNHGVSTQTPKI</sequence>
<accession>Q7MIT1</accession>
<organism>
    <name type="scientific">Vibrio vulnificus (strain YJ016)</name>
    <dbReference type="NCBI Taxonomy" id="196600"/>
    <lineage>
        <taxon>Bacteria</taxon>
        <taxon>Pseudomonadati</taxon>
        <taxon>Pseudomonadota</taxon>
        <taxon>Gammaproteobacteria</taxon>
        <taxon>Vibrionales</taxon>
        <taxon>Vibrionaceae</taxon>
        <taxon>Vibrio</taxon>
    </lineage>
</organism>
<name>AROC_VIBVY</name>
<gene>
    <name evidence="1" type="primary">aroC</name>
    <name type="ordered locus">VV2434</name>
</gene>
<comment type="function">
    <text evidence="1">Catalyzes the anti-1,4-elimination of the C-3 phosphate and the C-6 proR hydrogen from 5-enolpyruvylshikimate-3-phosphate (EPSP) to yield chorismate, which is the branch point compound that serves as the starting substrate for the three terminal pathways of aromatic amino acid biosynthesis. This reaction introduces a second double bond into the aromatic ring system.</text>
</comment>
<comment type="catalytic activity">
    <reaction evidence="1">
        <text>5-O-(1-carboxyvinyl)-3-phosphoshikimate = chorismate + phosphate</text>
        <dbReference type="Rhea" id="RHEA:21020"/>
        <dbReference type="ChEBI" id="CHEBI:29748"/>
        <dbReference type="ChEBI" id="CHEBI:43474"/>
        <dbReference type="ChEBI" id="CHEBI:57701"/>
        <dbReference type="EC" id="4.2.3.5"/>
    </reaction>
</comment>
<comment type="cofactor">
    <cofactor evidence="1">
        <name>FMNH2</name>
        <dbReference type="ChEBI" id="CHEBI:57618"/>
    </cofactor>
    <text evidence="1">Reduced FMN (FMNH(2)).</text>
</comment>
<comment type="pathway">
    <text evidence="1">Metabolic intermediate biosynthesis; chorismate biosynthesis; chorismate from D-erythrose 4-phosphate and phosphoenolpyruvate: step 7/7.</text>
</comment>
<comment type="subunit">
    <text evidence="1">Homotetramer.</text>
</comment>
<comment type="similarity">
    <text evidence="1">Belongs to the chorismate synthase family.</text>
</comment>
<comment type="sequence caution" evidence="2">
    <conflict type="erroneous initiation">
        <sequence resource="EMBL-CDS" id="BAC95198"/>
    </conflict>
    <text>Extended N-terminus.</text>
</comment>
<keyword id="KW-0028">Amino-acid biosynthesis</keyword>
<keyword id="KW-0057">Aromatic amino acid biosynthesis</keyword>
<keyword id="KW-0274">FAD</keyword>
<keyword id="KW-0285">Flavoprotein</keyword>
<keyword id="KW-0288">FMN</keyword>
<keyword id="KW-0456">Lyase</keyword>
<keyword id="KW-0521">NADP</keyword>
<protein>
    <recommendedName>
        <fullName evidence="1">Chorismate synthase</fullName>
        <shortName evidence="1">CS</shortName>
        <ecNumber evidence="1">4.2.3.5</ecNumber>
    </recommendedName>
    <alternativeName>
        <fullName evidence="1">5-enolpyruvylshikimate-3-phosphate phospholyase</fullName>
    </alternativeName>
</protein>